<feature type="chain" id="PRO_1000010598" description="Peptidyl-tRNA hydrolase">
    <location>
        <begin position="1"/>
        <end position="185"/>
    </location>
</feature>
<feature type="active site" description="Proton acceptor" evidence="1">
    <location>
        <position position="19"/>
    </location>
</feature>
<feature type="binding site" evidence="1">
    <location>
        <position position="14"/>
    </location>
    <ligand>
        <name>tRNA</name>
        <dbReference type="ChEBI" id="CHEBI:17843"/>
    </ligand>
</feature>
<feature type="binding site" evidence="1">
    <location>
        <position position="64"/>
    </location>
    <ligand>
        <name>tRNA</name>
        <dbReference type="ChEBI" id="CHEBI:17843"/>
    </ligand>
</feature>
<feature type="binding site" evidence="1">
    <location>
        <position position="66"/>
    </location>
    <ligand>
        <name>tRNA</name>
        <dbReference type="ChEBI" id="CHEBI:17843"/>
    </ligand>
</feature>
<feature type="binding site" evidence="1">
    <location>
        <position position="112"/>
    </location>
    <ligand>
        <name>tRNA</name>
        <dbReference type="ChEBI" id="CHEBI:17843"/>
    </ligand>
</feature>
<feature type="site" description="Discriminates between blocked and unblocked aminoacyl-tRNA" evidence="1">
    <location>
        <position position="9"/>
    </location>
</feature>
<feature type="site" description="Stabilizes the basic form of H active site to accept a proton" evidence="1">
    <location>
        <position position="91"/>
    </location>
</feature>
<reference key="1">
    <citation type="journal article" date="2006" name="Proc. Natl. Acad. Sci. U.S.A.">
        <title>Comparative genomics of the lactic acid bacteria.</title>
        <authorList>
            <person name="Makarova K.S."/>
            <person name="Slesarev A."/>
            <person name="Wolf Y.I."/>
            <person name="Sorokin A."/>
            <person name="Mirkin B."/>
            <person name="Koonin E.V."/>
            <person name="Pavlov A."/>
            <person name="Pavlova N."/>
            <person name="Karamychev V."/>
            <person name="Polouchine N."/>
            <person name="Shakhova V."/>
            <person name="Grigoriev I."/>
            <person name="Lou Y."/>
            <person name="Rohksar D."/>
            <person name="Lucas S."/>
            <person name="Huang K."/>
            <person name="Goodstein D.M."/>
            <person name="Hawkins T."/>
            <person name="Plengvidhya V."/>
            <person name="Welker D."/>
            <person name="Hughes J."/>
            <person name="Goh Y."/>
            <person name="Benson A."/>
            <person name="Baldwin K."/>
            <person name="Lee J.-H."/>
            <person name="Diaz-Muniz I."/>
            <person name="Dosti B."/>
            <person name="Smeianov V."/>
            <person name="Wechter W."/>
            <person name="Barabote R."/>
            <person name="Lorca G."/>
            <person name="Altermann E."/>
            <person name="Barrangou R."/>
            <person name="Ganesan B."/>
            <person name="Xie Y."/>
            <person name="Rawsthorne H."/>
            <person name="Tamir D."/>
            <person name="Parker C."/>
            <person name="Breidt F."/>
            <person name="Broadbent J.R."/>
            <person name="Hutkins R."/>
            <person name="O'Sullivan D."/>
            <person name="Steele J."/>
            <person name="Unlu G."/>
            <person name="Saier M.H. Jr."/>
            <person name="Klaenhammer T."/>
            <person name="Richardson P."/>
            <person name="Kozyavkin S."/>
            <person name="Weimer B.C."/>
            <person name="Mills D.A."/>
        </authorList>
    </citation>
    <scope>NUCLEOTIDE SEQUENCE [LARGE SCALE GENOMIC DNA]</scope>
    <source>
        <strain>ATCC 367 / BCRC 12310 / CIP 105137 / JCM 1170 / LMG 11437 / NCIMB 947 / NCTC 947</strain>
    </source>
</reference>
<comment type="function">
    <text evidence="1">Hydrolyzes ribosome-free peptidyl-tRNAs (with 1 or more amino acids incorporated), which drop off the ribosome during protein synthesis, or as a result of ribosome stalling.</text>
</comment>
<comment type="function">
    <text evidence="1">Catalyzes the release of premature peptidyl moieties from peptidyl-tRNA molecules trapped in stalled 50S ribosomal subunits, and thus maintains levels of free tRNAs and 50S ribosomes.</text>
</comment>
<comment type="catalytic activity">
    <reaction evidence="1">
        <text>an N-acyl-L-alpha-aminoacyl-tRNA + H2O = an N-acyl-L-amino acid + a tRNA + H(+)</text>
        <dbReference type="Rhea" id="RHEA:54448"/>
        <dbReference type="Rhea" id="RHEA-COMP:10123"/>
        <dbReference type="Rhea" id="RHEA-COMP:13883"/>
        <dbReference type="ChEBI" id="CHEBI:15377"/>
        <dbReference type="ChEBI" id="CHEBI:15378"/>
        <dbReference type="ChEBI" id="CHEBI:59874"/>
        <dbReference type="ChEBI" id="CHEBI:78442"/>
        <dbReference type="ChEBI" id="CHEBI:138191"/>
        <dbReference type="EC" id="3.1.1.29"/>
    </reaction>
</comment>
<comment type="subunit">
    <text evidence="1">Monomer.</text>
</comment>
<comment type="subcellular location">
    <subcellularLocation>
        <location evidence="1">Cytoplasm</location>
    </subcellularLocation>
</comment>
<comment type="similarity">
    <text evidence="1">Belongs to the PTH family.</text>
</comment>
<protein>
    <recommendedName>
        <fullName evidence="1">Peptidyl-tRNA hydrolase</fullName>
        <shortName evidence="1">Pth</shortName>
        <ecNumber evidence="1">3.1.1.29</ecNumber>
    </recommendedName>
</protein>
<organism>
    <name type="scientific">Levilactobacillus brevis (strain ATCC 367 / BCRC 12310 / CIP 105137 / JCM 1170 / LMG 11437 / NCIMB 947 / NCTC 947)</name>
    <name type="common">Lactobacillus brevis</name>
    <dbReference type="NCBI Taxonomy" id="387344"/>
    <lineage>
        <taxon>Bacteria</taxon>
        <taxon>Bacillati</taxon>
        <taxon>Bacillota</taxon>
        <taxon>Bacilli</taxon>
        <taxon>Lactobacillales</taxon>
        <taxon>Lactobacillaceae</taxon>
        <taxon>Levilactobacillus</taxon>
    </lineage>
</organism>
<evidence type="ECO:0000255" key="1">
    <source>
        <dbReference type="HAMAP-Rule" id="MF_00083"/>
    </source>
</evidence>
<accession>Q03SZ9</accession>
<name>PTH_LEVBA</name>
<keyword id="KW-0963">Cytoplasm</keyword>
<keyword id="KW-0378">Hydrolase</keyword>
<keyword id="KW-1185">Reference proteome</keyword>
<keyword id="KW-0694">RNA-binding</keyword>
<keyword id="KW-0820">tRNA-binding</keyword>
<gene>
    <name evidence="1" type="primary">pth</name>
    <name type="ordered locus">LVIS_0515</name>
</gene>
<sequence>MKMIVGLGNIGPQYDNTRHNTGFMVVDAFAQQHGIALTTRKMDARFGSGLVNGEKVLVVKPTTFMNESGRAVHPIMDYFKIDVADVMVVQDDMDLPLGRIRLRDHGSAGGHNGIKSIIAHVGTQNFGRLKVGIAHPQQHTVVDYVLGKFTTDQRPVFNQAADRAVAALDDWVAGSDFMQLMNQYN</sequence>
<dbReference type="EC" id="3.1.1.29" evidence="1"/>
<dbReference type="EMBL" id="CP000416">
    <property type="protein sequence ID" value="ABJ63673.1"/>
    <property type="molecule type" value="Genomic_DNA"/>
</dbReference>
<dbReference type="RefSeq" id="WP_011667299.1">
    <property type="nucleotide sequence ID" value="NC_008497.1"/>
</dbReference>
<dbReference type="SMR" id="Q03SZ9"/>
<dbReference type="STRING" id="387344.LVIS_0515"/>
<dbReference type="KEGG" id="lbr:LVIS_0515"/>
<dbReference type="eggNOG" id="COG0193">
    <property type="taxonomic scope" value="Bacteria"/>
</dbReference>
<dbReference type="HOGENOM" id="CLU_062456_4_1_9"/>
<dbReference type="Proteomes" id="UP000001652">
    <property type="component" value="Chromosome"/>
</dbReference>
<dbReference type="GO" id="GO:0005737">
    <property type="term" value="C:cytoplasm"/>
    <property type="evidence" value="ECO:0007669"/>
    <property type="project" value="UniProtKB-SubCell"/>
</dbReference>
<dbReference type="GO" id="GO:0004045">
    <property type="term" value="F:peptidyl-tRNA hydrolase activity"/>
    <property type="evidence" value="ECO:0007669"/>
    <property type="project" value="UniProtKB-UniRule"/>
</dbReference>
<dbReference type="GO" id="GO:0000049">
    <property type="term" value="F:tRNA binding"/>
    <property type="evidence" value="ECO:0007669"/>
    <property type="project" value="UniProtKB-UniRule"/>
</dbReference>
<dbReference type="GO" id="GO:0006515">
    <property type="term" value="P:protein quality control for misfolded or incompletely synthesized proteins"/>
    <property type="evidence" value="ECO:0007669"/>
    <property type="project" value="UniProtKB-UniRule"/>
</dbReference>
<dbReference type="GO" id="GO:0072344">
    <property type="term" value="P:rescue of stalled ribosome"/>
    <property type="evidence" value="ECO:0007669"/>
    <property type="project" value="UniProtKB-UniRule"/>
</dbReference>
<dbReference type="CDD" id="cd00462">
    <property type="entry name" value="PTH"/>
    <property type="match status" value="1"/>
</dbReference>
<dbReference type="FunFam" id="3.40.50.1470:FF:000001">
    <property type="entry name" value="Peptidyl-tRNA hydrolase"/>
    <property type="match status" value="1"/>
</dbReference>
<dbReference type="Gene3D" id="3.40.50.1470">
    <property type="entry name" value="Peptidyl-tRNA hydrolase"/>
    <property type="match status" value="1"/>
</dbReference>
<dbReference type="HAMAP" id="MF_00083">
    <property type="entry name" value="Pept_tRNA_hydro_bact"/>
    <property type="match status" value="1"/>
</dbReference>
<dbReference type="InterPro" id="IPR001328">
    <property type="entry name" value="Pept_tRNA_hydro"/>
</dbReference>
<dbReference type="InterPro" id="IPR018171">
    <property type="entry name" value="Pept_tRNA_hydro_CS"/>
</dbReference>
<dbReference type="InterPro" id="IPR036416">
    <property type="entry name" value="Pept_tRNA_hydro_sf"/>
</dbReference>
<dbReference type="NCBIfam" id="TIGR00447">
    <property type="entry name" value="pth"/>
    <property type="match status" value="1"/>
</dbReference>
<dbReference type="PANTHER" id="PTHR17224">
    <property type="entry name" value="PEPTIDYL-TRNA HYDROLASE"/>
    <property type="match status" value="1"/>
</dbReference>
<dbReference type="PANTHER" id="PTHR17224:SF1">
    <property type="entry name" value="PEPTIDYL-TRNA HYDROLASE"/>
    <property type="match status" value="1"/>
</dbReference>
<dbReference type="Pfam" id="PF01195">
    <property type="entry name" value="Pept_tRNA_hydro"/>
    <property type="match status" value="1"/>
</dbReference>
<dbReference type="SUPFAM" id="SSF53178">
    <property type="entry name" value="Peptidyl-tRNA hydrolase-like"/>
    <property type="match status" value="1"/>
</dbReference>
<dbReference type="PROSITE" id="PS01195">
    <property type="entry name" value="PEPT_TRNA_HYDROL_1"/>
    <property type="match status" value="1"/>
</dbReference>
<dbReference type="PROSITE" id="PS01196">
    <property type="entry name" value="PEPT_TRNA_HYDROL_2"/>
    <property type="match status" value="1"/>
</dbReference>
<proteinExistence type="inferred from homology"/>